<comment type="function">
    <text evidence="1">Catalyzes the reversible reaction in which hydroxymethyl group from 5,10-methylenetetrahydrofolate is transferred onto alpha-ketoisovalerate to form ketopantoate.</text>
</comment>
<comment type="catalytic activity">
    <reaction evidence="1">
        <text>3-methyl-2-oxobutanoate + (6R)-5,10-methylene-5,6,7,8-tetrahydrofolate + H2O = 2-dehydropantoate + (6S)-5,6,7,8-tetrahydrofolate</text>
        <dbReference type="Rhea" id="RHEA:11824"/>
        <dbReference type="ChEBI" id="CHEBI:11561"/>
        <dbReference type="ChEBI" id="CHEBI:11851"/>
        <dbReference type="ChEBI" id="CHEBI:15377"/>
        <dbReference type="ChEBI" id="CHEBI:15636"/>
        <dbReference type="ChEBI" id="CHEBI:57453"/>
        <dbReference type="EC" id="2.1.2.11"/>
    </reaction>
</comment>
<comment type="cofactor">
    <cofactor evidence="1">
        <name>Mg(2+)</name>
        <dbReference type="ChEBI" id="CHEBI:18420"/>
    </cofactor>
    <text evidence="1">Binds 1 Mg(2+) ion per subunit.</text>
</comment>
<comment type="pathway">
    <text evidence="1">Cofactor biosynthesis; (R)-pantothenate biosynthesis; (R)-pantoate from 3-methyl-2-oxobutanoate: step 1/2.</text>
</comment>
<comment type="subunit">
    <text evidence="1">Homodecamer; pentamer of dimers.</text>
</comment>
<comment type="subcellular location">
    <subcellularLocation>
        <location evidence="1">Cytoplasm</location>
    </subcellularLocation>
</comment>
<comment type="similarity">
    <text evidence="1">Belongs to the PanB family.</text>
</comment>
<organism>
    <name type="scientific">Xanthomonas oryzae pv. oryzae (strain MAFF 311018)</name>
    <dbReference type="NCBI Taxonomy" id="342109"/>
    <lineage>
        <taxon>Bacteria</taxon>
        <taxon>Pseudomonadati</taxon>
        <taxon>Pseudomonadota</taxon>
        <taxon>Gammaproteobacteria</taxon>
        <taxon>Lysobacterales</taxon>
        <taxon>Lysobacteraceae</taxon>
        <taxon>Xanthomonas</taxon>
    </lineage>
</organism>
<sequence length="271" mass="28433">MSSHADSNPWTVPALAQAKRAGRKLVMLTAYDASFARTFDANGVDLILVGDSLGMVMQGHDSTLAVTTADMVYHTAAVARALDRALLVADLSFQADATPERALDAATQLLQAGAEMVKIEGAGHKLEVIRYLVEREIPVCSHLGLTPQSVLRFGGYKVQGRGEAGEQLRRDAQAVVDAGASLVVLECVPTPIATQISAELSVPTIGIGAGPGCDGQVLVMHDMLGLDSGHRRPKFVKDFLAEGGSVAGAVRAYAQAVRDGSFPDAEHAYAA</sequence>
<feature type="chain" id="PRO_0000297413" description="3-methyl-2-oxobutanoate hydroxymethyltransferase">
    <location>
        <begin position="1"/>
        <end position="271"/>
    </location>
</feature>
<feature type="active site" description="Proton acceptor" evidence="1">
    <location>
        <position position="186"/>
    </location>
</feature>
<feature type="binding site" evidence="1">
    <location>
        <begin position="51"/>
        <end position="52"/>
    </location>
    <ligand>
        <name>3-methyl-2-oxobutanoate</name>
        <dbReference type="ChEBI" id="CHEBI:11851"/>
    </ligand>
</feature>
<feature type="binding site" evidence="1">
    <location>
        <position position="51"/>
    </location>
    <ligand>
        <name>Mg(2+)</name>
        <dbReference type="ChEBI" id="CHEBI:18420"/>
    </ligand>
</feature>
<feature type="binding site" evidence="1">
    <location>
        <position position="90"/>
    </location>
    <ligand>
        <name>3-methyl-2-oxobutanoate</name>
        <dbReference type="ChEBI" id="CHEBI:11851"/>
    </ligand>
</feature>
<feature type="binding site" evidence="1">
    <location>
        <position position="90"/>
    </location>
    <ligand>
        <name>Mg(2+)</name>
        <dbReference type="ChEBI" id="CHEBI:18420"/>
    </ligand>
</feature>
<feature type="binding site" evidence="1">
    <location>
        <position position="118"/>
    </location>
    <ligand>
        <name>3-methyl-2-oxobutanoate</name>
        <dbReference type="ChEBI" id="CHEBI:11851"/>
    </ligand>
</feature>
<feature type="binding site" evidence="1">
    <location>
        <position position="120"/>
    </location>
    <ligand>
        <name>Mg(2+)</name>
        <dbReference type="ChEBI" id="CHEBI:18420"/>
    </ligand>
</feature>
<accession>Q2P377</accession>
<name>PANB_XANOM</name>
<evidence type="ECO:0000255" key="1">
    <source>
        <dbReference type="HAMAP-Rule" id="MF_00156"/>
    </source>
</evidence>
<gene>
    <name evidence="1" type="primary">panB</name>
    <name type="ordered locus">XOO2245</name>
</gene>
<proteinExistence type="inferred from homology"/>
<dbReference type="EC" id="2.1.2.11" evidence="1"/>
<dbReference type="EMBL" id="AP008229">
    <property type="protein sequence ID" value="BAE69000.1"/>
    <property type="molecule type" value="Genomic_DNA"/>
</dbReference>
<dbReference type="RefSeq" id="WP_011408567.1">
    <property type="nucleotide sequence ID" value="NC_007705.1"/>
</dbReference>
<dbReference type="SMR" id="Q2P377"/>
<dbReference type="KEGG" id="xom:XOO2245"/>
<dbReference type="HOGENOM" id="CLU_036645_1_0_6"/>
<dbReference type="UniPathway" id="UPA00028">
    <property type="reaction ID" value="UER00003"/>
</dbReference>
<dbReference type="GO" id="GO:0005737">
    <property type="term" value="C:cytoplasm"/>
    <property type="evidence" value="ECO:0007669"/>
    <property type="project" value="UniProtKB-SubCell"/>
</dbReference>
<dbReference type="GO" id="GO:0003864">
    <property type="term" value="F:3-methyl-2-oxobutanoate hydroxymethyltransferase activity"/>
    <property type="evidence" value="ECO:0007669"/>
    <property type="project" value="UniProtKB-UniRule"/>
</dbReference>
<dbReference type="GO" id="GO:0000287">
    <property type="term" value="F:magnesium ion binding"/>
    <property type="evidence" value="ECO:0007669"/>
    <property type="project" value="TreeGrafter"/>
</dbReference>
<dbReference type="GO" id="GO:0015940">
    <property type="term" value="P:pantothenate biosynthetic process"/>
    <property type="evidence" value="ECO:0007669"/>
    <property type="project" value="UniProtKB-UniRule"/>
</dbReference>
<dbReference type="CDD" id="cd06557">
    <property type="entry name" value="KPHMT-like"/>
    <property type="match status" value="1"/>
</dbReference>
<dbReference type="FunFam" id="3.20.20.60:FF:000032">
    <property type="entry name" value="3-methyl-2-oxobutanoate hydroxymethyltransferase"/>
    <property type="match status" value="1"/>
</dbReference>
<dbReference type="Gene3D" id="3.20.20.60">
    <property type="entry name" value="Phosphoenolpyruvate-binding domains"/>
    <property type="match status" value="1"/>
</dbReference>
<dbReference type="HAMAP" id="MF_00156">
    <property type="entry name" value="PanB"/>
    <property type="match status" value="1"/>
</dbReference>
<dbReference type="InterPro" id="IPR003700">
    <property type="entry name" value="Pantoate_hydroxy_MeTrfase"/>
</dbReference>
<dbReference type="InterPro" id="IPR015813">
    <property type="entry name" value="Pyrv/PenolPyrv_kinase-like_dom"/>
</dbReference>
<dbReference type="InterPro" id="IPR040442">
    <property type="entry name" value="Pyrv_kinase-like_dom_sf"/>
</dbReference>
<dbReference type="NCBIfam" id="TIGR00222">
    <property type="entry name" value="panB"/>
    <property type="match status" value="1"/>
</dbReference>
<dbReference type="NCBIfam" id="NF001452">
    <property type="entry name" value="PRK00311.1"/>
    <property type="match status" value="1"/>
</dbReference>
<dbReference type="PANTHER" id="PTHR20881">
    <property type="entry name" value="3-METHYL-2-OXOBUTANOATE HYDROXYMETHYLTRANSFERASE"/>
    <property type="match status" value="1"/>
</dbReference>
<dbReference type="PANTHER" id="PTHR20881:SF0">
    <property type="entry name" value="3-METHYL-2-OXOBUTANOATE HYDROXYMETHYLTRANSFERASE"/>
    <property type="match status" value="1"/>
</dbReference>
<dbReference type="Pfam" id="PF02548">
    <property type="entry name" value="Pantoate_transf"/>
    <property type="match status" value="1"/>
</dbReference>
<dbReference type="PIRSF" id="PIRSF000388">
    <property type="entry name" value="Pantoate_hydroxy_MeTrfase"/>
    <property type="match status" value="1"/>
</dbReference>
<dbReference type="SUPFAM" id="SSF51621">
    <property type="entry name" value="Phosphoenolpyruvate/pyruvate domain"/>
    <property type="match status" value="1"/>
</dbReference>
<reference key="1">
    <citation type="journal article" date="2005" name="Jpn. Agric. Res. Q.">
        <title>Genome sequence of Xanthomonas oryzae pv. oryzae suggests contribution of large numbers of effector genes and insertion sequences to its race diversity.</title>
        <authorList>
            <person name="Ochiai H."/>
            <person name="Inoue Y."/>
            <person name="Takeya M."/>
            <person name="Sasaki A."/>
            <person name="Kaku H."/>
        </authorList>
    </citation>
    <scope>NUCLEOTIDE SEQUENCE [LARGE SCALE GENOMIC DNA]</scope>
    <source>
        <strain>MAFF 311018</strain>
    </source>
</reference>
<protein>
    <recommendedName>
        <fullName evidence="1">3-methyl-2-oxobutanoate hydroxymethyltransferase</fullName>
        <ecNumber evidence="1">2.1.2.11</ecNumber>
    </recommendedName>
    <alternativeName>
        <fullName evidence="1">Ketopantoate hydroxymethyltransferase</fullName>
        <shortName evidence="1">KPHMT</shortName>
    </alternativeName>
</protein>
<keyword id="KW-0963">Cytoplasm</keyword>
<keyword id="KW-0460">Magnesium</keyword>
<keyword id="KW-0479">Metal-binding</keyword>
<keyword id="KW-0566">Pantothenate biosynthesis</keyword>
<keyword id="KW-0808">Transferase</keyword>